<name>RL20_BACAC</name>
<keyword id="KW-0687">Ribonucleoprotein</keyword>
<keyword id="KW-0689">Ribosomal protein</keyword>
<keyword id="KW-0694">RNA-binding</keyword>
<keyword id="KW-0699">rRNA-binding</keyword>
<proteinExistence type="inferred from homology"/>
<dbReference type="EMBL" id="CP001215">
    <property type="protein sequence ID" value="ACP17656.1"/>
    <property type="molecule type" value="Genomic_DNA"/>
</dbReference>
<dbReference type="RefSeq" id="WP_001138362.1">
    <property type="nucleotide sequence ID" value="NC_012581.1"/>
</dbReference>
<dbReference type="SMR" id="C3L8V1"/>
<dbReference type="GeneID" id="93006537"/>
<dbReference type="KEGG" id="bah:BAMEG_4847"/>
<dbReference type="HOGENOM" id="CLU_123265_0_1_9"/>
<dbReference type="GO" id="GO:1990904">
    <property type="term" value="C:ribonucleoprotein complex"/>
    <property type="evidence" value="ECO:0007669"/>
    <property type="project" value="UniProtKB-KW"/>
</dbReference>
<dbReference type="GO" id="GO:0005840">
    <property type="term" value="C:ribosome"/>
    <property type="evidence" value="ECO:0007669"/>
    <property type="project" value="UniProtKB-KW"/>
</dbReference>
<dbReference type="GO" id="GO:0019843">
    <property type="term" value="F:rRNA binding"/>
    <property type="evidence" value="ECO:0007669"/>
    <property type="project" value="UniProtKB-UniRule"/>
</dbReference>
<dbReference type="GO" id="GO:0003735">
    <property type="term" value="F:structural constituent of ribosome"/>
    <property type="evidence" value="ECO:0007669"/>
    <property type="project" value="InterPro"/>
</dbReference>
<dbReference type="GO" id="GO:0000027">
    <property type="term" value="P:ribosomal large subunit assembly"/>
    <property type="evidence" value="ECO:0007669"/>
    <property type="project" value="UniProtKB-UniRule"/>
</dbReference>
<dbReference type="GO" id="GO:0006412">
    <property type="term" value="P:translation"/>
    <property type="evidence" value="ECO:0007669"/>
    <property type="project" value="InterPro"/>
</dbReference>
<dbReference type="CDD" id="cd07026">
    <property type="entry name" value="Ribosomal_L20"/>
    <property type="match status" value="1"/>
</dbReference>
<dbReference type="FunFam" id="1.10.1900.20:FF:000001">
    <property type="entry name" value="50S ribosomal protein L20"/>
    <property type="match status" value="1"/>
</dbReference>
<dbReference type="Gene3D" id="6.10.160.10">
    <property type="match status" value="1"/>
</dbReference>
<dbReference type="Gene3D" id="1.10.1900.20">
    <property type="entry name" value="Ribosomal protein L20"/>
    <property type="match status" value="1"/>
</dbReference>
<dbReference type="HAMAP" id="MF_00382">
    <property type="entry name" value="Ribosomal_bL20"/>
    <property type="match status" value="1"/>
</dbReference>
<dbReference type="InterPro" id="IPR005813">
    <property type="entry name" value="Ribosomal_bL20"/>
</dbReference>
<dbReference type="InterPro" id="IPR049946">
    <property type="entry name" value="RIBOSOMAL_L20_CS"/>
</dbReference>
<dbReference type="InterPro" id="IPR035566">
    <property type="entry name" value="Ribosomal_protein_bL20_C"/>
</dbReference>
<dbReference type="NCBIfam" id="TIGR01032">
    <property type="entry name" value="rplT_bact"/>
    <property type="match status" value="1"/>
</dbReference>
<dbReference type="PANTHER" id="PTHR10986">
    <property type="entry name" value="39S RIBOSOMAL PROTEIN L20"/>
    <property type="match status" value="1"/>
</dbReference>
<dbReference type="Pfam" id="PF00453">
    <property type="entry name" value="Ribosomal_L20"/>
    <property type="match status" value="1"/>
</dbReference>
<dbReference type="PRINTS" id="PR00062">
    <property type="entry name" value="RIBOSOMALL20"/>
</dbReference>
<dbReference type="SUPFAM" id="SSF74731">
    <property type="entry name" value="Ribosomal protein L20"/>
    <property type="match status" value="1"/>
</dbReference>
<dbReference type="PROSITE" id="PS00937">
    <property type="entry name" value="RIBOSOMAL_L20"/>
    <property type="match status" value="1"/>
</dbReference>
<gene>
    <name evidence="1" type="primary">rplT</name>
    <name type="ordered locus">BAMEG_4847</name>
</gene>
<comment type="function">
    <text evidence="1">Binds directly to 23S ribosomal RNA and is necessary for the in vitro assembly process of the 50S ribosomal subunit. It is not involved in the protein synthesizing functions of that subunit.</text>
</comment>
<comment type="similarity">
    <text evidence="1">Belongs to the bacterial ribosomal protein bL20 family.</text>
</comment>
<accession>C3L8V1</accession>
<feature type="chain" id="PRO_1000193935" description="Large ribosomal subunit protein bL20">
    <location>
        <begin position="1"/>
        <end position="118"/>
    </location>
</feature>
<protein>
    <recommendedName>
        <fullName evidence="1">Large ribosomal subunit protein bL20</fullName>
    </recommendedName>
    <alternativeName>
        <fullName evidence="2">50S ribosomal protein L20</fullName>
    </alternativeName>
</protein>
<evidence type="ECO:0000255" key="1">
    <source>
        <dbReference type="HAMAP-Rule" id="MF_00382"/>
    </source>
</evidence>
<evidence type="ECO:0000305" key="2"/>
<sequence>MPRVKGGTVTRQRRKKVIKLAKGYYGSKNTLFKVANQQVMKSLMYAFRDRRQKKRDFRKLWITRINAAARMNGLSYSRLMHGLKNAGIEVNRKMLADLAVHDEKAFAELATVAKNNIN</sequence>
<organism>
    <name type="scientific">Bacillus anthracis (strain CDC 684 / NRRL 3495)</name>
    <dbReference type="NCBI Taxonomy" id="568206"/>
    <lineage>
        <taxon>Bacteria</taxon>
        <taxon>Bacillati</taxon>
        <taxon>Bacillota</taxon>
        <taxon>Bacilli</taxon>
        <taxon>Bacillales</taxon>
        <taxon>Bacillaceae</taxon>
        <taxon>Bacillus</taxon>
        <taxon>Bacillus cereus group</taxon>
    </lineage>
</organism>
<reference key="1">
    <citation type="submission" date="2008-10" db="EMBL/GenBank/DDBJ databases">
        <title>Genome sequence of Bacillus anthracis str. CDC 684.</title>
        <authorList>
            <person name="Dodson R.J."/>
            <person name="Munk A.C."/>
            <person name="Brettin T."/>
            <person name="Bruce D."/>
            <person name="Detter C."/>
            <person name="Tapia R."/>
            <person name="Han C."/>
            <person name="Sutton G."/>
            <person name="Sims D."/>
        </authorList>
    </citation>
    <scope>NUCLEOTIDE SEQUENCE [LARGE SCALE GENOMIC DNA]</scope>
    <source>
        <strain>CDC 684 / NRRL 3495</strain>
    </source>
</reference>